<feature type="chain" id="PRO_1000184818" description="ATP synthase subunit delta">
    <location>
        <begin position="1"/>
        <end position="178"/>
    </location>
</feature>
<organism>
    <name type="scientific">Streptococcus pneumoniae (strain P1031)</name>
    <dbReference type="NCBI Taxonomy" id="488223"/>
    <lineage>
        <taxon>Bacteria</taxon>
        <taxon>Bacillati</taxon>
        <taxon>Bacillota</taxon>
        <taxon>Bacilli</taxon>
        <taxon>Lactobacillales</taxon>
        <taxon>Streptococcaceae</taxon>
        <taxon>Streptococcus</taxon>
    </lineage>
</organism>
<evidence type="ECO:0000255" key="1">
    <source>
        <dbReference type="HAMAP-Rule" id="MF_01416"/>
    </source>
</evidence>
<accession>C1CLK9</accession>
<reference key="1">
    <citation type="journal article" date="2010" name="Genome Biol.">
        <title>Structure and dynamics of the pan-genome of Streptococcus pneumoniae and closely related species.</title>
        <authorList>
            <person name="Donati C."/>
            <person name="Hiller N.L."/>
            <person name="Tettelin H."/>
            <person name="Muzzi A."/>
            <person name="Croucher N.J."/>
            <person name="Angiuoli S.V."/>
            <person name="Oggioni M."/>
            <person name="Dunning Hotopp J.C."/>
            <person name="Hu F.Z."/>
            <person name="Riley D.R."/>
            <person name="Covacci A."/>
            <person name="Mitchell T.J."/>
            <person name="Bentley S.D."/>
            <person name="Kilian M."/>
            <person name="Ehrlich G.D."/>
            <person name="Rappuoli R."/>
            <person name="Moxon E.R."/>
            <person name="Masignani V."/>
        </authorList>
    </citation>
    <scope>NUCLEOTIDE SEQUENCE [LARGE SCALE GENOMIC DNA]</scope>
    <source>
        <strain>P1031</strain>
    </source>
</reference>
<proteinExistence type="inferred from homology"/>
<name>ATPD_STRZP</name>
<protein>
    <recommendedName>
        <fullName evidence="1">ATP synthase subunit delta</fullName>
    </recommendedName>
    <alternativeName>
        <fullName evidence="1">ATP synthase F(1) sector subunit delta</fullName>
    </alternativeName>
    <alternativeName>
        <fullName evidence="1">F-type ATPase subunit delta</fullName>
        <shortName evidence="1">F-ATPase subunit delta</shortName>
    </alternativeName>
</protein>
<comment type="function">
    <text evidence="1">F(1)F(0) ATP synthase produces ATP from ADP in the presence of a proton or sodium gradient. F-type ATPases consist of two structural domains, F(1) containing the extramembraneous catalytic core and F(0) containing the membrane proton channel, linked together by a central stalk and a peripheral stalk. During catalysis, ATP synthesis in the catalytic domain of F(1) is coupled via a rotary mechanism of the central stalk subunits to proton translocation.</text>
</comment>
<comment type="function">
    <text evidence="1">This protein is part of the stalk that links CF(0) to CF(1). It either transmits conformational changes from CF(0) to CF(1) or is implicated in proton conduction.</text>
</comment>
<comment type="subunit">
    <text evidence="1">F-type ATPases have 2 components, F(1) - the catalytic core - and F(0) - the membrane proton channel. F(1) has five subunits: alpha(3), beta(3), gamma(1), delta(1), epsilon(1). F(0) has three main subunits: a(1), b(2) and c(10-14). The alpha and beta chains form an alternating ring which encloses part of the gamma chain. F(1) is attached to F(0) by a central stalk formed by the gamma and epsilon chains, while a peripheral stalk is formed by the delta and b chains.</text>
</comment>
<comment type="subcellular location">
    <subcellularLocation>
        <location evidence="1">Cell membrane</location>
        <topology evidence="1">Peripheral membrane protein</topology>
    </subcellularLocation>
</comment>
<comment type="similarity">
    <text evidence="1">Belongs to the ATPase delta chain family.</text>
</comment>
<sequence>MDKKTVKVIEKYSMPFVQLVLEKGEEDRIFSDLTQIKQVVEKTGLPSFLKQVAVDESDKEKTIAFFQDSVSPLLQNFIQVLAYNHRANLFYDVLVDCLNRLEKETNRFEVTITSAHPLTDEQKTRLLPLIEKKMSLKVRSVKEQIDESLIGGFVIFANHKTIDVSIKQQLKVVKENLK</sequence>
<gene>
    <name evidence="1" type="primary">atpH</name>
    <name type="ordered locus">SPP_1530</name>
</gene>
<dbReference type="EMBL" id="CP000920">
    <property type="protein sequence ID" value="ACO20392.1"/>
    <property type="molecule type" value="Genomic_DNA"/>
</dbReference>
<dbReference type="RefSeq" id="WP_000359036.1">
    <property type="nucleotide sequence ID" value="NC_012467.1"/>
</dbReference>
<dbReference type="SMR" id="C1CLK9"/>
<dbReference type="KEGG" id="spp:SPP_1530"/>
<dbReference type="HOGENOM" id="CLU_085114_1_2_9"/>
<dbReference type="GO" id="GO:0005886">
    <property type="term" value="C:plasma membrane"/>
    <property type="evidence" value="ECO:0007669"/>
    <property type="project" value="UniProtKB-SubCell"/>
</dbReference>
<dbReference type="GO" id="GO:0045259">
    <property type="term" value="C:proton-transporting ATP synthase complex"/>
    <property type="evidence" value="ECO:0007669"/>
    <property type="project" value="UniProtKB-KW"/>
</dbReference>
<dbReference type="GO" id="GO:0046933">
    <property type="term" value="F:proton-transporting ATP synthase activity, rotational mechanism"/>
    <property type="evidence" value="ECO:0007669"/>
    <property type="project" value="UniProtKB-UniRule"/>
</dbReference>
<dbReference type="Gene3D" id="1.10.520.20">
    <property type="entry name" value="N-terminal domain of the delta subunit of the F1F0-ATP synthase"/>
    <property type="match status" value="1"/>
</dbReference>
<dbReference type="HAMAP" id="MF_01416">
    <property type="entry name" value="ATP_synth_delta_bact"/>
    <property type="match status" value="1"/>
</dbReference>
<dbReference type="InterPro" id="IPR026015">
    <property type="entry name" value="ATP_synth_OSCP/delta_N_sf"/>
</dbReference>
<dbReference type="InterPro" id="IPR000711">
    <property type="entry name" value="ATPase_OSCP/dsu"/>
</dbReference>
<dbReference type="NCBIfam" id="TIGR01145">
    <property type="entry name" value="ATP_synt_delta"/>
    <property type="match status" value="1"/>
</dbReference>
<dbReference type="NCBIfam" id="NF004401">
    <property type="entry name" value="PRK05758.2-1"/>
    <property type="match status" value="1"/>
</dbReference>
<dbReference type="PANTHER" id="PTHR11910">
    <property type="entry name" value="ATP SYNTHASE DELTA CHAIN"/>
    <property type="match status" value="1"/>
</dbReference>
<dbReference type="Pfam" id="PF00213">
    <property type="entry name" value="OSCP"/>
    <property type="match status" value="1"/>
</dbReference>
<dbReference type="PRINTS" id="PR00125">
    <property type="entry name" value="ATPASEDELTA"/>
</dbReference>
<dbReference type="SUPFAM" id="SSF47928">
    <property type="entry name" value="N-terminal domain of the delta subunit of the F1F0-ATP synthase"/>
    <property type="match status" value="1"/>
</dbReference>
<keyword id="KW-0066">ATP synthesis</keyword>
<keyword id="KW-1003">Cell membrane</keyword>
<keyword id="KW-0139">CF(1)</keyword>
<keyword id="KW-0375">Hydrogen ion transport</keyword>
<keyword id="KW-0406">Ion transport</keyword>
<keyword id="KW-0472">Membrane</keyword>
<keyword id="KW-0813">Transport</keyword>